<comment type="function">
    <text evidence="1">Inhibits the supercoiling activity of DNA gyrase. Acts by inhibiting DNA gyrase at an early step, prior to (or at the step of) binding of DNA by the gyrase. It protects cells against toxins that target DNA gyrase, by inhibiting activity of these toxins and reducing the formation of lethal double-strand breaks in the cell.</text>
</comment>
<comment type="subunit">
    <text evidence="1">Interacts with DNA gyrase.</text>
</comment>
<comment type="subcellular location">
    <subcellularLocation>
        <location evidence="1">Cytoplasm</location>
    </subcellularLocation>
</comment>
<comment type="similarity">
    <text evidence="1">Belongs to the DNA gyrase inhibitor family.</text>
</comment>
<accession>E0SBQ8</accession>
<organism>
    <name type="scientific">Dickeya dadantii (strain 3937)</name>
    <name type="common">Erwinia chrysanthemi (strain 3937)</name>
    <dbReference type="NCBI Taxonomy" id="198628"/>
    <lineage>
        <taxon>Bacteria</taxon>
        <taxon>Pseudomonadati</taxon>
        <taxon>Pseudomonadota</taxon>
        <taxon>Gammaproteobacteria</taxon>
        <taxon>Enterobacterales</taxon>
        <taxon>Pectobacteriaceae</taxon>
        <taxon>Dickeya</taxon>
    </lineage>
</organism>
<reference key="1">
    <citation type="journal article" date="2011" name="J. Bacteriol.">
        <title>Genome sequence of the plant-pathogenic bacterium Dickeya dadantii 3937.</title>
        <authorList>
            <person name="Glasner J.D."/>
            <person name="Yang C.H."/>
            <person name="Reverchon S."/>
            <person name="Hugouvieux-Cotte-Pattat N."/>
            <person name="Condemine G."/>
            <person name="Bohin J.P."/>
            <person name="Van Gijsegem F."/>
            <person name="Yang S."/>
            <person name="Franza T."/>
            <person name="Expert D."/>
            <person name="Plunkett G. III"/>
            <person name="San Francisco M.J."/>
            <person name="Charkowski A.O."/>
            <person name="Py B."/>
            <person name="Bell K."/>
            <person name="Rauscher L."/>
            <person name="Rodriguez-Palenzuela P."/>
            <person name="Toussaint A."/>
            <person name="Holeva M.C."/>
            <person name="He S.Y."/>
            <person name="Douet V."/>
            <person name="Boccara M."/>
            <person name="Blanco C."/>
            <person name="Toth I."/>
            <person name="Anderson B.D."/>
            <person name="Biehl B.S."/>
            <person name="Mau B."/>
            <person name="Flynn S.M."/>
            <person name="Barras F."/>
            <person name="Lindeberg M."/>
            <person name="Birch P.R."/>
            <person name="Tsuyumu S."/>
            <person name="Shi X."/>
            <person name="Hibbing M."/>
            <person name="Yap M.N."/>
            <person name="Carpentier M."/>
            <person name="Dassa E."/>
            <person name="Umehara M."/>
            <person name="Kim J.F."/>
            <person name="Rusch M."/>
            <person name="Soni P."/>
            <person name="Mayhew G.F."/>
            <person name="Fouts D.E."/>
            <person name="Gill S.R."/>
            <person name="Blattner F.R."/>
            <person name="Keen N.T."/>
            <person name="Perna N.T."/>
        </authorList>
    </citation>
    <scope>NUCLEOTIDE SEQUENCE [LARGE SCALE GENOMIC DNA]</scope>
    <source>
        <strain>3937</strain>
    </source>
</reference>
<proteinExistence type="inferred from homology"/>
<protein>
    <recommendedName>
        <fullName evidence="1">DNA gyrase inhibitor 2</fullName>
    </recommendedName>
</protein>
<sequence length="157" mass="17599">MTLRFDVAPPKKVHCLRVIGPYYQSVPDGFQKLMAWSQEQQLPWTETLAFYWDDPSETEQDQLRADVALVLPEGTAIGENTLGVREETVPGGLFAVLHTIVSNGEFAKAWNELYDLIAQNGYKPARGICFESYLCDGSSGNWEIEIWQSVDPNDGAQ</sequence>
<feature type="chain" id="PRO_0000409694" description="DNA gyrase inhibitor 2">
    <location>
        <begin position="1"/>
        <end position="157"/>
    </location>
</feature>
<gene>
    <name evidence="1" type="primary">sbmC2</name>
    <name type="ordered locus">Dda3937_01484</name>
</gene>
<name>SBMC2_DICD3</name>
<evidence type="ECO:0000255" key="1">
    <source>
        <dbReference type="HAMAP-Rule" id="MF_01896"/>
    </source>
</evidence>
<keyword id="KW-0963">Cytoplasm</keyword>
<keyword id="KW-1185">Reference proteome</keyword>
<keyword id="KW-0346">Stress response</keyword>
<dbReference type="EMBL" id="CP002038">
    <property type="protein sequence ID" value="ADM97206.1"/>
    <property type="molecule type" value="Genomic_DNA"/>
</dbReference>
<dbReference type="RefSeq" id="WP_013316679.1">
    <property type="nucleotide sequence ID" value="NC_014500.1"/>
</dbReference>
<dbReference type="SMR" id="E0SBQ8"/>
<dbReference type="STRING" id="198628.Dda3937_01484"/>
<dbReference type="KEGG" id="ddd:Dda3937_01484"/>
<dbReference type="PATRIC" id="fig|198628.6.peg.1009"/>
<dbReference type="eggNOG" id="COG3449">
    <property type="taxonomic scope" value="Bacteria"/>
</dbReference>
<dbReference type="HOGENOM" id="CLU_113664_3_2_6"/>
<dbReference type="OrthoDB" id="282744at2"/>
<dbReference type="Proteomes" id="UP000006859">
    <property type="component" value="Chromosome"/>
</dbReference>
<dbReference type="GO" id="GO:0005737">
    <property type="term" value="C:cytoplasm"/>
    <property type="evidence" value="ECO:0007669"/>
    <property type="project" value="UniProtKB-SubCell"/>
</dbReference>
<dbReference type="GO" id="GO:0008657">
    <property type="term" value="F:DNA topoisomerase type II (double strand cut, ATP-hydrolyzing) inhibitor activity"/>
    <property type="evidence" value="ECO:0007669"/>
    <property type="project" value="UniProtKB-UniRule"/>
</dbReference>
<dbReference type="Gene3D" id="3.20.80.10">
    <property type="entry name" value="Regulatory factor, effector binding domain"/>
    <property type="match status" value="1"/>
</dbReference>
<dbReference type="HAMAP" id="MF_01896">
    <property type="entry name" value="DNA_gyrase_inhibitor"/>
    <property type="match status" value="1"/>
</dbReference>
<dbReference type="InterPro" id="IPR010499">
    <property type="entry name" value="AraC_E-bd"/>
</dbReference>
<dbReference type="InterPro" id="IPR050908">
    <property type="entry name" value="DNA_gyrase_inhibitor"/>
</dbReference>
<dbReference type="InterPro" id="IPR024911">
    <property type="entry name" value="DNA_gyrase_inhibitor_GyrI"/>
</dbReference>
<dbReference type="InterPro" id="IPR029442">
    <property type="entry name" value="GyrI-like"/>
</dbReference>
<dbReference type="InterPro" id="IPR011256">
    <property type="entry name" value="Reg_factor_effector_dom_sf"/>
</dbReference>
<dbReference type="PANTHER" id="PTHR40055:SF2">
    <property type="entry name" value="DNA GYRASE INHIBITOR"/>
    <property type="match status" value="1"/>
</dbReference>
<dbReference type="PANTHER" id="PTHR40055">
    <property type="entry name" value="TRANSCRIPTIONAL REGULATOR YGIV-RELATED"/>
    <property type="match status" value="1"/>
</dbReference>
<dbReference type="Pfam" id="PF06445">
    <property type="entry name" value="GyrI-like"/>
    <property type="match status" value="1"/>
</dbReference>
<dbReference type="SMART" id="SM00871">
    <property type="entry name" value="AraC_E_bind"/>
    <property type="match status" value="1"/>
</dbReference>
<dbReference type="SUPFAM" id="SSF55136">
    <property type="entry name" value="Probable bacterial effector-binding domain"/>
    <property type="match status" value="1"/>
</dbReference>